<feature type="chain" id="PRO_0000070560" description="UPF0210 protein NMB1652">
    <location>
        <begin position="1"/>
        <end position="451"/>
    </location>
</feature>
<comment type="subunit">
    <text evidence="1">Homodimer.</text>
</comment>
<comment type="similarity">
    <text evidence="1">Belongs to the UPF0210 family.</text>
</comment>
<proteinExistence type="inferred from homology"/>
<dbReference type="EMBL" id="AE002098">
    <property type="protein sequence ID" value="AAF42001.1"/>
    <property type="molecule type" value="Genomic_DNA"/>
</dbReference>
<dbReference type="PIR" id="C81059">
    <property type="entry name" value="C81059"/>
</dbReference>
<dbReference type="RefSeq" id="NP_274657.1">
    <property type="nucleotide sequence ID" value="NC_003112.2"/>
</dbReference>
<dbReference type="RefSeq" id="WP_002218495.1">
    <property type="nucleotide sequence ID" value="NC_003112.2"/>
</dbReference>
<dbReference type="SMR" id="Q9JYC3"/>
<dbReference type="STRING" id="122586.NMB1652"/>
<dbReference type="PaxDb" id="122586-NMB1652"/>
<dbReference type="KEGG" id="nme:NMB1652"/>
<dbReference type="PATRIC" id="fig|122586.8.peg.2125"/>
<dbReference type="HOGENOM" id="CLU_048704_0_0_4"/>
<dbReference type="InParanoid" id="Q9JYC3"/>
<dbReference type="OrthoDB" id="9763001at2"/>
<dbReference type="Proteomes" id="UP000000425">
    <property type="component" value="Chromosome"/>
</dbReference>
<dbReference type="CDD" id="cd08025">
    <property type="entry name" value="RNR_PFL_like_DUF711"/>
    <property type="match status" value="1"/>
</dbReference>
<dbReference type="Gene3D" id="3.20.70.20">
    <property type="match status" value="1"/>
</dbReference>
<dbReference type="HAMAP" id="MF_01221">
    <property type="entry name" value="UPF0210"/>
    <property type="match status" value="1"/>
</dbReference>
<dbReference type="InterPro" id="IPR007841">
    <property type="entry name" value="UPF0210"/>
</dbReference>
<dbReference type="NCBIfam" id="NF003700">
    <property type="entry name" value="PRK05313.1"/>
    <property type="match status" value="1"/>
</dbReference>
<dbReference type="PANTHER" id="PTHR37560:SF1">
    <property type="entry name" value="UPF0210 PROTEIN MJ1665"/>
    <property type="match status" value="1"/>
</dbReference>
<dbReference type="PANTHER" id="PTHR37560">
    <property type="entry name" value="UPF0210 PROTEIN SPR0218"/>
    <property type="match status" value="1"/>
</dbReference>
<dbReference type="Pfam" id="PF05167">
    <property type="entry name" value="DUF711"/>
    <property type="match status" value="1"/>
</dbReference>
<dbReference type="SUPFAM" id="SSF51998">
    <property type="entry name" value="PFL-like glycyl radical enzymes"/>
    <property type="match status" value="1"/>
</dbReference>
<gene>
    <name type="ordered locus">NMB1652</name>
</gene>
<accession>Q9JYC3</accession>
<name>Y1652_NEIMB</name>
<keyword id="KW-1185">Reference proteome</keyword>
<evidence type="ECO:0000255" key="1">
    <source>
        <dbReference type="HAMAP-Rule" id="MF_01221"/>
    </source>
</evidence>
<organism>
    <name type="scientific">Neisseria meningitidis serogroup B (strain ATCC BAA-335 / MC58)</name>
    <dbReference type="NCBI Taxonomy" id="122586"/>
    <lineage>
        <taxon>Bacteria</taxon>
        <taxon>Pseudomonadati</taxon>
        <taxon>Pseudomonadota</taxon>
        <taxon>Betaproteobacteria</taxon>
        <taxon>Neisseriales</taxon>
        <taxon>Neisseriaceae</taxon>
        <taxon>Neisseria</taxon>
    </lineage>
</organism>
<sequence length="451" mass="46429">MSIQSGEILETVKMVADQNFDVRTITIGIDLHDCISSDINVLNQNIYNKITTVGKDLVTTAKYLSAKYGVPIVNQRISVTPIAQIAAATHADSYVSVAQTLDKAAKAIGVSFIGGFSALVQKGMSPSDEVLIRSIPEAMKTTDIVCSSINIGSTRAGINMDAVKLAGETVKRTAEITPEGFGCAKIVVFCNAVEDNPFMAGAFHGSGEADAVINVGVSGPGVVKAALENSDATTLTEVAEVVKKTAFKITRVGELIGREASKMLNIPFGILDLSLAPTPAVGDSVARILEEMGLSVCGTHGTTAALALLNDAVKKGGMMASSAVGGLSGAFIPVSEDEGMIAAAEAGVLTLDKLEAMTAVCSVGLDMIAVPGDTPAHTISGIIADEAAIGMINSKTTAVRIIPVTGKTVGDSVEFGGLLGYAPVMPVKEGSCEVFVNRGGRIPAPVQSMKN</sequence>
<protein>
    <recommendedName>
        <fullName evidence="1">UPF0210 protein NMB1652</fullName>
    </recommendedName>
</protein>
<reference key="1">
    <citation type="journal article" date="2000" name="Science">
        <title>Complete genome sequence of Neisseria meningitidis serogroup B strain MC58.</title>
        <authorList>
            <person name="Tettelin H."/>
            <person name="Saunders N.J."/>
            <person name="Heidelberg J.F."/>
            <person name="Jeffries A.C."/>
            <person name="Nelson K.E."/>
            <person name="Eisen J.A."/>
            <person name="Ketchum K.A."/>
            <person name="Hood D.W."/>
            <person name="Peden J.F."/>
            <person name="Dodson R.J."/>
            <person name="Nelson W.C."/>
            <person name="Gwinn M.L."/>
            <person name="DeBoy R.T."/>
            <person name="Peterson J.D."/>
            <person name="Hickey E.K."/>
            <person name="Haft D.H."/>
            <person name="Salzberg S.L."/>
            <person name="White O."/>
            <person name="Fleischmann R.D."/>
            <person name="Dougherty B.A."/>
            <person name="Mason T.M."/>
            <person name="Ciecko A."/>
            <person name="Parksey D.S."/>
            <person name="Blair E."/>
            <person name="Cittone H."/>
            <person name="Clark E.B."/>
            <person name="Cotton M.D."/>
            <person name="Utterback T.R."/>
            <person name="Khouri H.M."/>
            <person name="Qin H."/>
            <person name="Vamathevan J.J."/>
            <person name="Gill J."/>
            <person name="Scarlato V."/>
            <person name="Masignani V."/>
            <person name="Pizza M."/>
            <person name="Grandi G."/>
            <person name="Sun L."/>
            <person name="Smith H.O."/>
            <person name="Fraser C.M."/>
            <person name="Moxon E.R."/>
            <person name="Rappuoli R."/>
            <person name="Venter J.C."/>
        </authorList>
    </citation>
    <scope>NUCLEOTIDE SEQUENCE [LARGE SCALE GENOMIC DNA]</scope>
    <source>
        <strain>ATCC BAA-335 / MC58</strain>
    </source>
</reference>